<keyword id="KW-0066">ATP synthesis</keyword>
<keyword id="KW-0067">ATP-binding</keyword>
<keyword id="KW-1003">Cell membrane</keyword>
<keyword id="KW-0903">Direct protein sequencing</keyword>
<keyword id="KW-0375">Hydrogen ion transport</keyword>
<keyword id="KW-0406">Ion transport</keyword>
<keyword id="KW-0472">Membrane</keyword>
<keyword id="KW-0547">Nucleotide-binding</keyword>
<keyword id="KW-1185">Reference proteome</keyword>
<keyword id="KW-1278">Translocase</keyword>
<keyword id="KW-0813">Transport</keyword>
<organism>
    <name type="scientific">Methanocaldococcus jannaschii (strain ATCC 43067 / DSM 2661 / JAL-1 / JCM 10045 / NBRC 100440)</name>
    <name type="common">Methanococcus jannaschii</name>
    <dbReference type="NCBI Taxonomy" id="243232"/>
    <lineage>
        <taxon>Archaea</taxon>
        <taxon>Methanobacteriati</taxon>
        <taxon>Methanobacteriota</taxon>
        <taxon>Methanomada group</taxon>
        <taxon>Methanococci</taxon>
        <taxon>Methanococcales</taxon>
        <taxon>Methanocaldococcaceae</taxon>
        <taxon>Methanocaldococcus</taxon>
    </lineage>
</organism>
<name>AATA_METJA</name>
<proteinExistence type="evidence at protein level"/>
<reference key="1">
    <citation type="journal article" date="1996" name="Science">
        <title>Complete genome sequence of the methanogenic archaeon, Methanococcus jannaschii.</title>
        <authorList>
            <person name="Bult C.J."/>
            <person name="White O."/>
            <person name="Olsen G.J."/>
            <person name="Zhou L."/>
            <person name="Fleischmann R.D."/>
            <person name="Sutton G.G."/>
            <person name="Blake J.A."/>
            <person name="FitzGerald L.M."/>
            <person name="Clayton R.A."/>
            <person name="Gocayne J.D."/>
            <person name="Kerlavage A.R."/>
            <person name="Dougherty B.A."/>
            <person name="Tomb J.-F."/>
            <person name="Adams M.D."/>
            <person name="Reich C.I."/>
            <person name="Overbeek R."/>
            <person name="Kirkness E.F."/>
            <person name="Weinstock K.G."/>
            <person name="Merrick J.M."/>
            <person name="Glodek A."/>
            <person name="Scott J.L."/>
            <person name="Geoghagen N.S.M."/>
            <person name="Weidman J.F."/>
            <person name="Fuhrmann J.L."/>
            <person name="Nguyen D."/>
            <person name="Utterback T.R."/>
            <person name="Kelley J.M."/>
            <person name="Peterson J.D."/>
            <person name="Sadow P.W."/>
            <person name="Hanna M.C."/>
            <person name="Cotton M.D."/>
            <person name="Roberts K.M."/>
            <person name="Hurst M.A."/>
            <person name="Kaine B.P."/>
            <person name="Borodovsky M."/>
            <person name="Klenk H.-P."/>
            <person name="Fraser C.M."/>
            <person name="Smith H.O."/>
            <person name="Woese C.R."/>
            <person name="Venter J.C."/>
        </authorList>
    </citation>
    <scope>NUCLEOTIDE SEQUENCE [LARGE SCALE GENOMIC DNA]</scope>
    <source>
        <strain>ATCC 43067 / DSM 2661 / JAL-1 / JCM 10045 / NBRC 100440</strain>
    </source>
</reference>
<reference key="2">
    <citation type="journal article" date="2003" name="Extremophiles">
        <title>Isolation of a complete A1AO ATP synthase comprising nine subunits from the hyperthermophile Methanococcus jannaschii.</title>
        <authorList>
            <person name="Lingl A."/>
            <person name="Huber H."/>
            <person name="Stetter K.O."/>
            <person name="Mayer F."/>
            <person name="Kellermann J."/>
            <person name="Mueller V."/>
        </authorList>
    </citation>
    <scope>PROTEIN SEQUENCE OF 2-7</scope>
    <scope>FUNCTION</scope>
    <scope>CATALYTIC ACTIVITY</scope>
    <scope>ACTIVITY REGULATION</scope>
    <scope>BIOPHYSICOCHEMICAL PROPERTIES</scope>
    <scope>SUBUNIT</scope>
    <scope>SUBCELLULAR LOCATION</scope>
    <scope>DOMAIN</scope>
    <source>
        <strain>ATCC 43067 / DSM 2661 / JAL-1 / JCM 10045 / NBRC 100440</strain>
    </source>
</reference>
<reference key="3">
    <citation type="journal article" date="2004" name="J. Biol. Chem.">
        <title>Structure and subunit arrangement of the A-type ATP synthase complex from the archaeon Methanococcus jannaschii visualized by electron microscopy.</title>
        <authorList>
            <person name="Coskun U."/>
            <person name="Chaban Y.L."/>
            <person name="Lingl A."/>
            <person name="Mueller V."/>
            <person name="Keegstra W."/>
            <person name="Boekema E.J."/>
            <person name="Grueber G."/>
        </authorList>
    </citation>
    <scope>STRUCTURE BY ELECTRON MICROSCOPY (18 ANGSTROMS) OF A-TYPE ATP SYNTHASE</scope>
    <scope>SUBUNIT</scope>
    <scope>SUBCELLULAR LOCATION</scope>
    <scope>DOMAIN</scope>
    <source>
        <strain>ATCC 43067 / DSM 2661 / JAL-1 / JCM 10045 / NBRC 100440</strain>
    </source>
</reference>
<reference key="4">
    <citation type="journal article" date="2007" name="Biochemistry">
        <title>Small-angle X-ray scattering reveals the solution structure of the peripheral stalk subunit H of the A1AO ATP synthase from Methanocaldococcus jannaschii and its binding to the catalytic A subunit.</title>
        <authorList>
            <person name="Biukovic G."/>
            <person name="Roessle M."/>
            <person name="Gayen S."/>
            <person name="Mu Y."/>
            <person name="Grueber G."/>
        </authorList>
    </citation>
    <scope>SUBUNIT</scope>
    <scope>INTERACTION WITH SUBUNIT H</scope>
    <source>
        <strain>ATCC 43067 / DSM 2661 / JAL-1 / JCM 10045 / NBRC 100440</strain>
    </source>
</reference>
<gene>
    <name evidence="1 6" type="primary">atpA</name>
    <name type="ordered locus">MJ0217</name>
</gene>
<sequence>MPVVGKIIKIAGPVVVAEGMKGAQMYEVVKVGEEKLTGEIIQLHDDKAVIQVYEETSGIKPGEPVVGTGAPLSVELGPGMLRAMYDGIQRPLTAIEEKTGSIFIPRGVDVPALPRDIKWEFKPVVNEGDYVEEGDIIGTVDETPSIVHKILVPIGVKGKIVEIKEGKFTVEETVAVVETENGERKEITMMQKWPVRKPRPYKEKLPPEIPLITGQRVEDTFFTLAKGGTAAIPGPFGSGKTVTQHQLAKWSDADVVVYIGCGERGNEMTEVIEEFPHLEDIRTGNKLMDRTVLIANTSNMPVAAREASVYTGITIAEYFRDMGYGVLLTADSTSRWAEAMREISGRLEEMPGEEGYPAYLASRLAQFYERAGRVITLGKDNRQGFVCIVGAVSPPGGDFSEPVTSNTLRIVKVFWALDANLARRRHFPAINWLQSYSLYIDDVTEWWNTNTGPDWRQLRDEAMSLLQKEAELQEIVQLVGPDALPDRERVILEVARMLREDFLQQDAFDEVDTYCPPMKQYLMLKIIMTFYQEALKAVERGVEPAKILGVSVKQDIARMKYIPHDEFINVKSKEIMEKIKNELGSLN</sequence>
<protein>
    <recommendedName>
        <fullName evidence="1">A-type ATP synthase subunit A</fullName>
        <ecNumber evidence="1 7">7.1.2.2</ecNumber>
    </recommendedName>
    <alternativeName>
        <fullName evidence="5">A1A0-type ATP synthase subunit A</fullName>
    </alternativeName>
</protein>
<feature type="initiator methionine" description="Removed" evidence="2">
    <location>
        <position position="1"/>
    </location>
</feature>
<feature type="chain" id="PRO_0000144599" description="A-type ATP synthase subunit A">
    <location>
        <begin position="2"/>
        <end position="587"/>
    </location>
</feature>
<feature type="binding site" evidence="1">
    <location>
        <begin position="234"/>
        <end position="241"/>
    </location>
    <ligand>
        <name>ATP</name>
        <dbReference type="ChEBI" id="CHEBI:30616"/>
    </ligand>
</feature>
<evidence type="ECO:0000255" key="1">
    <source>
        <dbReference type="HAMAP-Rule" id="MF_00309"/>
    </source>
</evidence>
<evidence type="ECO:0000269" key="2">
    <source>
    </source>
</evidence>
<evidence type="ECO:0000269" key="3">
    <source>
    </source>
</evidence>
<evidence type="ECO:0000269" key="4">
    <source>
    </source>
</evidence>
<evidence type="ECO:0000303" key="5">
    <source>
    </source>
</evidence>
<evidence type="ECO:0000303" key="6">
    <source>
    </source>
</evidence>
<evidence type="ECO:0000305" key="7">
    <source>
    </source>
</evidence>
<evidence type="ECO:0000305" key="8">
    <source>
    </source>
</evidence>
<accession>Q57670</accession>
<comment type="function">
    <text evidence="1 2">Component of the A-type ATP synthase that produces ATP from ADP in the presence of a proton gradient across the membrane. The A chain is the catalytic subunit (By similarity). Hydrolyzes ATP, GTP (86% of ATPase rate) and UTP (54% of ATPase rate), has very poor activity on CTP (PubMed:12768457).</text>
</comment>
<comment type="catalytic activity">
    <reaction evidence="1 7">
        <text>ATP + H2O + 4 H(+)(in) = ADP + phosphate + 5 H(+)(out)</text>
        <dbReference type="Rhea" id="RHEA:57720"/>
        <dbReference type="ChEBI" id="CHEBI:15377"/>
        <dbReference type="ChEBI" id="CHEBI:15378"/>
        <dbReference type="ChEBI" id="CHEBI:30616"/>
        <dbReference type="ChEBI" id="CHEBI:43474"/>
        <dbReference type="ChEBI" id="CHEBI:456216"/>
        <dbReference type="EC" id="7.1.2.2"/>
    </reaction>
    <physiologicalReaction direction="left-to-right" evidence="7">
        <dbReference type="Rhea" id="RHEA:57721"/>
    </physiologicalReaction>
</comment>
<comment type="activity regulation">
    <text evidence="2">ATP hydrolysis is inhibited by N',N'-dicyclohexylcarbodiimide.</text>
</comment>
<comment type="biophysicochemical properties">
    <kinetics>
        <KM evidence="2">1.2 mM for Mg-ATP</KM>
    </kinetics>
    <phDependence>
        <text evidence="2">Optimum pH is 6.0 for ATP hydrolysis.</text>
    </phDependence>
    <temperatureDependence>
        <text evidence="2">Optimum temperature is 80 degrees Celsius.</text>
    </temperatureDependence>
</comment>
<comment type="subunit">
    <text evidence="2 3 4">The N-terminus (approximately residues 106-122) interacts with subunit H (PubMed:17263559). Has multiple subunits with at least A(3), B(3), C, D, E(1 or 2), F, H(2), I and proteolipid K(x) (PubMed:12768457, PubMed:15220347).</text>
</comment>
<comment type="subcellular location">
    <subcellularLocation>
        <location evidence="1 2 3">Cell membrane</location>
        <topology evidence="1 2 3">Peripheral membrane protein</topology>
        <orientation evidence="7 8">Cytoplasmic side</orientation>
    </subcellularLocation>
</comment>
<comment type="domain">
    <text evidence="2 3">Purified ATP synthase is 25.9 nm long. The hydrophilic A1 domain is 9.4 X 11.5 nm, the central stalk is 8.0 X 3.9 nm and the membrane-bound A0 domain is 6.4 X 10.6 nm; the domains are connected by two stalks. ATP is synthesized or hydrolyzed by the A1 domain while ion translocation occurs via the A0 domain.</text>
</comment>
<comment type="similarity">
    <text evidence="1">Belongs to the ATPase alpha/beta chains family.</text>
</comment>
<comment type="sequence caution" evidence="2">
    <conflict type="erroneous initiation">
        <sequence resource="EMBL-CDS" id="AAB98200"/>
    </conflict>
    <text>Extended N-terminus.</text>
</comment>
<dbReference type="EC" id="7.1.2.2" evidence="1 7"/>
<dbReference type="EMBL" id="L77117">
    <property type="protein sequence ID" value="AAB98200.1"/>
    <property type="status" value="ALT_INIT"/>
    <property type="molecule type" value="Genomic_DNA"/>
</dbReference>
<dbReference type="PIR" id="B64327">
    <property type="entry name" value="B64327"/>
</dbReference>
<dbReference type="RefSeq" id="WP_064496424.1">
    <property type="nucleotide sequence ID" value="NC_000909.1"/>
</dbReference>
<dbReference type="SMR" id="Q57670"/>
<dbReference type="FunCoup" id="Q57670">
    <property type="interactions" value="107"/>
</dbReference>
<dbReference type="STRING" id="243232.MJ_0217"/>
<dbReference type="PaxDb" id="243232-MJ_0217"/>
<dbReference type="EnsemblBacteria" id="AAB98200">
    <property type="protein sequence ID" value="AAB98200"/>
    <property type="gene ID" value="MJ_0217"/>
</dbReference>
<dbReference type="GeneID" id="1451067"/>
<dbReference type="KEGG" id="mja:MJ_0217"/>
<dbReference type="eggNOG" id="arCOG00868">
    <property type="taxonomic scope" value="Archaea"/>
</dbReference>
<dbReference type="HOGENOM" id="CLU_008162_3_1_2"/>
<dbReference type="InParanoid" id="Q57670"/>
<dbReference type="OrthoDB" id="115235at2157"/>
<dbReference type="PhylomeDB" id="Q57670"/>
<dbReference type="Proteomes" id="UP000000805">
    <property type="component" value="Chromosome"/>
</dbReference>
<dbReference type="GO" id="GO:0005886">
    <property type="term" value="C:plasma membrane"/>
    <property type="evidence" value="ECO:0007669"/>
    <property type="project" value="UniProtKB-SubCell"/>
</dbReference>
<dbReference type="GO" id="GO:0033178">
    <property type="term" value="C:proton-transporting two-sector ATPase complex, catalytic domain"/>
    <property type="evidence" value="ECO:0007669"/>
    <property type="project" value="InterPro"/>
</dbReference>
<dbReference type="GO" id="GO:0005524">
    <property type="term" value="F:ATP binding"/>
    <property type="evidence" value="ECO:0007669"/>
    <property type="project" value="UniProtKB-UniRule"/>
</dbReference>
<dbReference type="GO" id="GO:0046933">
    <property type="term" value="F:proton-transporting ATP synthase activity, rotational mechanism"/>
    <property type="evidence" value="ECO:0007669"/>
    <property type="project" value="UniProtKB-UniRule"/>
</dbReference>
<dbReference type="GO" id="GO:0046961">
    <property type="term" value="F:proton-transporting ATPase activity, rotational mechanism"/>
    <property type="evidence" value="ECO:0000318"/>
    <property type="project" value="GO_Central"/>
</dbReference>
<dbReference type="GO" id="GO:0042777">
    <property type="term" value="P:proton motive force-driven plasma membrane ATP synthesis"/>
    <property type="evidence" value="ECO:0007669"/>
    <property type="project" value="UniProtKB-UniRule"/>
</dbReference>
<dbReference type="GO" id="GO:1902600">
    <property type="term" value="P:proton transmembrane transport"/>
    <property type="evidence" value="ECO:0000318"/>
    <property type="project" value="GO_Central"/>
</dbReference>
<dbReference type="CDD" id="cd18111">
    <property type="entry name" value="ATP-synt_V_A-type_alpha_C"/>
    <property type="match status" value="1"/>
</dbReference>
<dbReference type="CDD" id="cd18119">
    <property type="entry name" value="ATP-synt_V_A-type_alpha_N"/>
    <property type="match status" value="1"/>
</dbReference>
<dbReference type="CDD" id="cd01134">
    <property type="entry name" value="V_A-ATPase_A"/>
    <property type="match status" value="1"/>
</dbReference>
<dbReference type="FunFam" id="1.10.1140.10:FF:000002">
    <property type="entry name" value="V-type proton ATPase catalytic subunit A"/>
    <property type="match status" value="1"/>
</dbReference>
<dbReference type="FunFam" id="2.40.30.20:FF:000002">
    <property type="entry name" value="V-type proton ATPase catalytic subunit A"/>
    <property type="match status" value="1"/>
</dbReference>
<dbReference type="FunFam" id="2.40.50.100:FF:000008">
    <property type="entry name" value="V-type proton ATPase catalytic subunit A"/>
    <property type="match status" value="1"/>
</dbReference>
<dbReference type="Gene3D" id="2.40.30.20">
    <property type="match status" value="1"/>
</dbReference>
<dbReference type="Gene3D" id="2.40.50.100">
    <property type="match status" value="1"/>
</dbReference>
<dbReference type="Gene3D" id="1.10.1140.10">
    <property type="entry name" value="Bovine Mitochondrial F1-atpase, Atp Synthase Beta Chain, Chain D, domain 3"/>
    <property type="match status" value="1"/>
</dbReference>
<dbReference type="Gene3D" id="3.40.50.300">
    <property type="entry name" value="P-loop containing nucleotide triphosphate hydrolases"/>
    <property type="match status" value="1"/>
</dbReference>
<dbReference type="HAMAP" id="MF_00309">
    <property type="entry name" value="ATP_synth_A_arch"/>
    <property type="match status" value="1"/>
</dbReference>
<dbReference type="InterPro" id="IPR055190">
    <property type="entry name" value="ATP-synt_VA_C"/>
</dbReference>
<dbReference type="InterPro" id="IPR031686">
    <property type="entry name" value="ATP-synth_a_Xtn"/>
</dbReference>
<dbReference type="InterPro" id="IPR023366">
    <property type="entry name" value="ATP_synth_asu-like_sf"/>
</dbReference>
<dbReference type="InterPro" id="IPR005726">
    <property type="entry name" value="ATP_synth_asu_arc"/>
</dbReference>
<dbReference type="InterPro" id="IPR020003">
    <property type="entry name" value="ATPase_a/bsu_AS"/>
</dbReference>
<dbReference type="InterPro" id="IPR004100">
    <property type="entry name" value="ATPase_F1/V1/A1_a/bsu_N"/>
</dbReference>
<dbReference type="InterPro" id="IPR036121">
    <property type="entry name" value="ATPase_F1/V1/A1_a/bsu_N_sf"/>
</dbReference>
<dbReference type="InterPro" id="IPR000194">
    <property type="entry name" value="ATPase_F1/V1/A1_a/bsu_nucl-bd"/>
</dbReference>
<dbReference type="InterPro" id="IPR024034">
    <property type="entry name" value="ATPase_F1/V1_b/a_C"/>
</dbReference>
<dbReference type="InterPro" id="IPR027417">
    <property type="entry name" value="P-loop_NTPase"/>
</dbReference>
<dbReference type="InterPro" id="IPR022878">
    <property type="entry name" value="V-ATPase_asu"/>
</dbReference>
<dbReference type="NCBIfam" id="TIGR01043">
    <property type="entry name" value="ATP_syn_A_arch"/>
    <property type="match status" value="1"/>
</dbReference>
<dbReference type="NCBIfam" id="NF003220">
    <property type="entry name" value="PRK04192.1"/>
    <property type="match status" value="1"/>
</dbReference>
<dbReference type="PANTHER" id="PTHR43607:SF1">
    <property type="entry name" value="H(+)-TRANSPORTING TWO-SECTOR ATPASE"/>
    <property type="match status" value="1"/>
</dbReference>
<dbReference type="PANTHER" id="PTHR43607">
    <property type="entry name" value="V-TYPE PROTON ATPASE CATALYTIC SUBUNIT A"/>
    <property type="match status" value="1"/>
</dbReference>
<dbReference type="Pfam" id="PF00006">
    <property type="entry name" value="ATP-synt_ab"/>
    <property type="match status" value="1"/>
</dbReference>
<dbReference type="Pfam" id="PF02874">
    <property type="entry name" value="ATP-synt_ab_N"/>
    <property type="match status" value="1"/>
</dbReference>
<dbReference type="Pfam" id="PF16886">
    <property type="entry name" value="ATP-synt_ab_Xtn"/>
    <property type="match status" value="1"/>
</dbReference>
<dbReference type="Pfam" id="PF22919">
    <property type="entry name" value="ATP-synt_VA_C"/>
    <property type="match status" value="1"/>
</dbReference>
<dbReference type="SUPFAM" id="SSF47917">
    <property type="entry name" value="C-terminal domain of alpha and beta subunits of F1 ATP synthase"/>
    <property type="match status" value="1"/>
</dbReference>
<dbReference type="SUPFAM" id="SSF50615">
    <property type="entry name" value="N-terminal domain of alpha and beta subunits of F1 ATP synthase"/>
    <property type="match status" value="1"/>
</dbReference>
<dbReference type="SUPFAM" id="SSF52540">
    <property type="entry name" value="P-loop containing nucleoside triphosphate hydrolases"/>
    <property type="match status" value="1"/>
</dbReference>
<dbReference type="PROSITE" id="PS00152">
    <property type="entry name" value="ATPASE_ALPHA_BETA"/>
    <property type="match status" value="1"/>
</dbReference>